<accession>Q4UKW1</accession>
<sequence length="128" mass="14351">MQKRVRNRLITIIICFCSAALGISIVLYNLEKNIVFFLPPSKINEIEQGKELRVGGLVKIDSINKIAADKISFVITDNIRDLEILYQGVLPALFREGQGIIAIGQLSDGKFIARQLLAKHDENYRPPS</sequence>
<proteinExistence type="inferred from homology"/>
<evidence type="ECO:0000255" key="1">
    <source>
        <dbReference type="HAMAP-Rule" id="MF_01959"/>
    </source>
</evidence>
<dbReference type="EMBL" id="CP000053">
    <property type="protein sequence ID" value="AAY61812.1"/>
    <property type="molecule type" value="Genomic_DNA"/>
</dbReference>
<dbReference type="SMR" id="Q4UKW1"/>
<dbReference type="STRING" id="315456.RF_0961"/>
<dbReference type="KEGG" id="rfe:RF_0961"/>
<dbReference type="eggNOG" id="COG2332">
    <property type="taxonomic scope" value="Bacteria"/>
</dbReference>
<dbReference type="HOGENOM" id="CLU_079503_1_1_5"/>
<dbReference type="OrthoDB" id="9793584at2"/>
<dbReference type="Proteomes" id="UP000008548">
    <property type="component" value="Chromosome"/>
</dbReference>
<dbReference type="GO" id="GO:0005886">
    <property type="term" value="C:plasma membrane"/>
    <property type="evidence" value="ECO:0007669"/>
    <property type="project" value="UniProtKB-SubCell"/>
</dbReference>
<dbReference type="GO" id="GO:0020037">
    <property type="term" value="F:heme binding"/>
    <property type="evidence" value="ECO:0007669"/>
    <property type="project" value="InterPro"/>
</dbReference>
<dbReference type="GO" id="GO:0046872">
    <property type="term" value="F:metal ion binding"/>
    <property type="evidence" value="ECO:0007669"/>
    <property type="project" value="UniProtKB-KW"/>
</dbReference>
<dbReference type="GO" id="GO:0017004">
    <property type="term" value="P:cytochrome complex assembly"/>
    <property type="evidence" value="ECO:0007669"/>
    <property type="project" value="UniProtKB-KW"/>
</dbReference>
<dbReference type="Gene3D" id="2.40.50.140">
    <property type="entry name" value="Nucleic acid-binding proteins"/>
    <property type="match status" value="1"/>
</dbReference>
<dbReference type="HAMAP" id="MF_01959">
    <property type="entry name" value="CcmE"/>
    <property type="match status" value="1"/>
</dbReference>
<dbReference type="InterPro" id="IPR004329">
    <property type="entry name" value="CcmE"/>
</dbReference>
<dbReference type="InterPro" id="IPR036127">
    <property type="entry name" value="CcmE-like_sf"/>
</dbReference>
<dbReference type="InterPro" id="IPR012340">
    <property type="entry name" value="NA-bd_OB-fold"/>
</dbReference>
<dbReference type="NCBIfam" id="NF009727">
    <property type="entry name" value="PRK13254.1-1"/>
    <property type="match status" value="1"/>
</dbReference>
<dbReference type="PANTHER" id="PTHR34128">
    <property type="entry name" value="CYTOCHROME C-TYPE BIOGENESIS PROTEIN CCME HOMOLOG, MITOCHONDRIAL"/>
    <property type="match status" value="1"/>
</dbReference>
<dbReference type="PANTHER" id="PTHR34128:SF2">
    <property type="entry name" value="CYTOCHROME C-TYPE BIOGENESIS PROTEIN CCME HOMOLOG, MITOCHONDRIAL"/>
    <property type="match status" value="1"/>
</dbReference>
<dbReference type="Pfam" id="PF03100">
    <property type="entry name" value="CcmE"/>
    <property type="match status" value="1"/>
</dbReference>
<dbReference type="SUPFAM" id="SSF82093">
    <property type="entry name" value="Heme chaperone CcmE"/>
    <property type="match status" value="1"/>
</dbReference>
<comment type="function">
    <text evidence="1">Heme chaperone required for the biogenesis of c-type cytochromes. Transiently binds heme delivered by CcmC and transfers the heme to apo-cytochromes in a process facilitated by CcmF and CcmH.</text>
</comment>
<comment type="subcellular location">
    <subcellularLocation>
        <location evidence="1">Cell inner membrane</location>
        <topology evidence="1">Single-pass type II membrane protein</topology>
        <orientation evidence="1">Periplasmic side</orientation>
    </subcellularLocation>
</comment>
<comment type="similarity">
    <text evidence="1">Belongs to the CcmE/CycJ family.</text>
</comment>
<protein>
    <recommendedName>
        <fullName evidence="1">Cytochrome c-type biogenesis protein CcmE</fullName>
    </recommendedName>
    <alternativeName>
        <fullName evidence="1">Cytochrome c maturation protein E</fullName>
    </alternativeName>
    <alternativeName>
        <fullName evidence="1">Heme chaperone CcmE</fullName>
    </alternativeName>
</protein>
<gene>
    <name evidence="1" type="primary">ccmE</name>
    <name evidence="1" type="synonym">cycJ</name>
    <name type="ordered locus">RF_0961</name>
</gene>
<name>CCME_RICFE</name>
<keyword id="KW-0997">Cell inner membrane</keyword>
<keyword id="KW-1003">Cell membrane</keyword>
<keyword id="KW-0201">Cytochrome c-type biogenesis</keyword>
<keyword id="KW-0349">Heme</keyword>
<keyword id="KW-0408">Iron</keyword>
<keyword id="KW-0472">Membrane</keyword>
<keyword id="KW-0479">Metal-binding</keyword>
<keyword id="KW-0735">Signal-anchor</keyword>
<keyword id="KW-0812">Transmembrane</keyword>
<keyword id="KW-1133">Transmembrane helix</keyword>
<feature type="chain" id="PRO_0000238856" description="Cytochrome c-type biogenesis protein CcmE">
    <location>
        <begin position="1"/>
        <end position="128"/>
    </location>
</feature>
<feature type="topological domain" description="Cytoplasmic" evidence="1">
    <location>
        <begin position="1"/>
        <end position="8"/>
    </location>
</feature>
<feature type="transmembrane region" description="Helical; Signal-anchor for type II membrane protein" evidence="1">
    <location>
        <begin position="9"/>
        <end position="29"/>
    </location>
</feature>
<feature type="topological domain" description="Periplasmic" evidence="1">
    <location>
        <begin position="30"/>
        <end position="128"/>
    </location>
</feature>
<feature type="binding site" description="covalent" evidence="1">
    <location>
        <position position="120"/>
    </location>
    <ligand>
        <name>heme</name>
        <dbReference type="ChEBI" id="CHEBI:30413"/>
    </ligand>
</feature>
<feature type="binding site" description="axial binding residue" evidence="1">
    <location>
        <position position="124"/>
    </location>
    <ligand>
        <name>heme</name>
        <dbReference type="ChEBI" id="CHEBI:30413"/>
    </ligand>
    <ligandPart>
        <name>Fe</name>
        <dbReference type="ChEBI" id="CHEBI:18248"/>
    </ligandPart>
</feature>
<organism>
    <name type="scientific">Rickettsia felis (strain ATCC VR-1525 / URRWXCal2)</name>
    <name type="common">Rickettsia azadi</name>
    <dbReference type="NCBI Taxonomy" id="315456"/>
    <lineage>
        <taxon>Bacteria</taxon>
        <taxon>Pseudomonadati</taxon>
        <taxon>Pseudomonadota</taxon>
        <taxon>Alphaproteobacteria</taxon>
        <taxon>Rickettsiales</taxon>
        <taxon>Rickettsiaceae</taxon>
        <taxon>Rickettsieae</taxon>
        <taxon>Rickettsia</taxon>
        <taxon>spotted fever group</taxon>
    </lineage>
</organism>
<reference key="1">
    <citation type="journal article" date="2005" name="PLoS Biol.">
        <title>The genome sequence of Rickettsia felis identifies the first putative conjugative plasmid in an obligate intracellular parasite.</title>
        <authorList>
            <person name="Ogata H."/>
            <person name="Renesto P."/>
            <person name="Audic S."/>
            <person name="Robert C."/>
            <person name="Blanc G."/>
            <person name="Fournier P.-E."/>
            <person name="Parinello H."/>
            <person name="Claverie J.-M."/>
            <person name="Raoult D."/>
        </authorList>
    </citation>
    <scope>NUCLEOTIDE SEQUENCE [LARGE SCALE GENOMIC DNA]</scope>
    <source>
        <strain>ATCC VR-1525 / URRWXCal2</strain>
    </source>
</reference>